<comment type="function">
    <text evidence="1">Catalyzes the synthesis of GMP from XMP.</text>
</comment>
<comment type="catalytic activity">
    <reaction evidence="1">
        <text>XMP + L-glutamine + ATP + H2O = GMP + L-glutamate + AMP + diphosphate + 2 H(+)</text>
        <dbReference type="Rhea" id="RHEA:11680"/>
        <dbReference type="ChEBI" id="CHEBI:15377"/>
        <dbReference type="ChEBI" id="CHEBI:15378"/>
        <dbReference type="ChEBI" id="CHEBI:29985"/>
        <dbReference type="ChEBI" id="CHEBI:30616"/>
        <dbReference type="ChEBI" id="CHEBI:33019"/>
        <dbReference type="ChEBI" id="CHEBI:57464"/>
        <dbReference type="ChEBI" id="CHEBI:58115"/>
        <dbReference type="ChEBI" id="CHEBI:58359"/>
        <dbReference type="ChEBI" id="CHEBI:456215"/>
        <dbReference type="EC" id="6.3.5.2"/>
    </reaction>
</comment>
<comment type="pathway">
    <text evidence="1">Purine metabolism; GMP biosynthesis; GMP from XMP (L-Gln route): step 1/1.</text>
</comment>
<comment type="subunit">
    <text evidence="1">Homodimer.</text>
</comment>
<dbReference type="EC" id="6.3.5.2" evidence="1"/>
<dbReference type="EMBL" id="AL596167">
    <property type="protein sequence ID" value="CAC96312.1"/>
    <property type="molecule type" value="Genomic_DNA"/>
</dbReference>
<dbReference type="PIR" id="AH1567">
    <property type="entry name" value="AH1567"/>
</dbReference>
<dbReference type="RefSeq" id="WP_010990748.1">
    <property type="nucleotide sequence ID" value="NC_003212.1"/>
</dbReference>
<dbReference type="SMR" id="Q92CU0"/>
<dbReference type="STRING" id="272626.gene:17565411"/>
<dbReference type="MEROPS" id="C26.957"/>
<dbReference type="GeneID" id="93234529"/>
<dbReference type="KEGG" id="lin:guaA"/>
<dbReference type="eggNOG" id="COG0518">
    <property type="taxonomic scope" value="Bacteria"/>
</dbReference>
<dbReference type="eggNOG" id="COG0519">
    <property type="taxonomic scope" value="Bacteria"/>
</dbReference>
<dbReference type="HOGENOM" id="CLU_014340_0_5_9"/>
<dbReference type="OrthoDB" id="9802219at2"/>
<dbReference type="UniPathway" id="UPA00189">
    <property type="reaction ID" value="UER00296"/>
</dbReference>
<dbReference type="Proteomes" id="UP000002513">
    <property type="component" value="Chromosome"/>
</dbReference>
<dbReference type="GO" id="GO:0005829">
    <property type="term" value="C:cytosol"/>
    <property type="evidence" value="ECO:0007669"/>
    <property type="project" value="TreeGrafter"/>
</dbReference>
<dbReference type="GO" id="GO:0005524">
    <property type="term" value="F:ATP binding"/>
    <property type="evidence" value="ECO:0007669"/>
    <property type="project" value="UniProtKB-UniRule"/>
</dbReference>
<dbReference type="GO" id="GO:0003921">
    <property type="term" value="F:GMP synthase activity"/>
    <property type="evidence" value="ECO:0007669"/>
    <property type="project" value="InterPro"/>
</dbReference>
<dbReference type="CDD" id="cd01742">
    <property type="entry name" value="GATase1_GMP_Synthase"/>
    <property type="match status" value="1"/>
</dbReference>
<dbReference type="CDD" id="cd01997">
    <property type="entry name" value="GMP_synthase_C"/>
    <property type="match status" value="1"/>
</dbReference>
<dbReference type="FunFam" id="3.30.300.10:FF:000002">
    <property type="entry name" value="GMP synthase [glutamine-hydrolyzing]"/>
    <property type="match status" value="1"/>
</dbReference>
<dbReference type="FunFam" id="3.40.50.620:FF:000001">
    <property type="entry name" value="GMP synthase [glutamine-hydrolyzing]"/>
    <property type="match status" value="1"/>
</dbReference>
<dbReference type="FunFam" id="3.40.50.880:FF:000001">
    <property type="entry name" value="GMP synthase [glutamine-hydrolyzing]"/>
    <property type="match status" value="1"/>
</dbReference>
<dbReference type="Gene3D" id="3.30.300.10">
    <property type="match status" value="1"/>
</dbReference>
<dbReference type="Gene3D" id="3.40.50.880">
    <property type="match status" value="1"/>
</dbReference>
<dbReference type="Gene3D" id="3.40.50.620">
    <property type="entry name" value="HUPs"/>
    <property type="match status" value="1"/>
</dbReference>
<dbReference type="HAMAP" id="MF_00344">
    <property type="entry name" value="GMP_synthase"/>
    <property type="match status" value="1"/>
</dbReference>
<dbReference type="InterPro" id="IPR029062">
    <property type="entry name" value="Class_I_gatase-like"/>
</dbReference>
<dbReference type="InterPro" id="IPR017926">
    <property type="entry name" value="GATASE"/>
</dbReference>
<dbReference type="InterPro" id="IPR001674">
    <property type="entry name" value="GMP_synth_C"/>
</dbReference>
<dbReference type="InterPro" id="IPR004739">
    <property type="entry name" value="GMP_synth_GATase"/>
</dbReference>
<dbReference type="InterPro" id="IPR022955">
    <property type="entry name" value="GMP_synthase"/>
</dbReference>
<dbReference type="InterPro" id="IPR025777">
    <property type="entry name" value="GMPS_ATP_PPase_dom"/>
</dbReference>
<dbReference type="InterPro" id="IPR022310">
    <property type="entry name" value="NAD/GMP_synthase"/>
</dbReference>
<dbReference type="InterPro" id="IPR014729">
    <property type="entry name" value="Rossmann-like_a/b/a_fold"/>
</dbReference>
<dbReference type="NCBIfam" id="TIGR00884">
    <property type="entry name" value="guaA_Cterm"/>
    <property type="match status" value="1"/>
</dbReference>
<dbReference type="NCBIfam" id="TIGR00888">
    <property type="entry name" value="guaA_Nterm"/>
    <property type="match status" value="1"/>
</dbReference>
<dbReference type="NCBIfam" id="NF000848">
    <property type="entry name" value="PRK00074.1"/>
    <property type="match status" value="1"/>
</dbReference>
<dbReference type="PANTHER" id="PTHR11922:SF2">
    <property type="entry name" value="GMP SYNTHASE [GLUTAMINE-HYDROLYZING]"/>
    <property type="match status" value="1"/>
</dbReference>
<dbReference type="PANTHER" id="PTHR11922">
    <property type="entry name" value="GMP SYNTHASE-RELATED"/>
    <property type="match status" value="1"/>
</dbReference>
<dbReference type="Pfam" id="PF00117">
    <property type="entry name" value="GATase"/>
    <property type="match status" value="1"/>
</dbReference>
<dbReference type="Pfam" id="PF00958">
    <property type="entry name" value="GMP_synt_C"/>
    <property type="match status" value="1"/>
</dbReference>
<dbReference type="Pfam" id="PF02540">
    <property type="entry name" value="NAD_synthase"/>
    <property type="match status" value="1"/>
</dbReference>
<dbReference type="PRINTS" id="PR00097">
    <property type="entry name" value="ANTSNTHASEII"/>
</dbReference>
<dbReference type="PRINTS" id="PR00099">
    <property type="entry name" value="CPSGATASE"/>
</dbReference>
<dbReference type="PRINTS" id="PR00096">
    <property type="entry name" value="GATASE"/>
</dbReference>
<dbReference type="SUPFAM" id="SSF52402">
    <property type="entry name" value="Adenine nucleotide alpha hydrolases-like"/>
    <property type="match status" value="1"/>
</dbReference>
<dbReference type="SUPFAM" id="SSF52317">
    <property type="entry name" value="Class I glutamine amidotransferase-like"/>
    <property type="match status" value="1"/>
</dbReference>
<dbReference type="SUPFAM" id="SSF54810">
    <property type="entry name" value="GMP synthetase C-terminal dimerisation domain"/>
    <property type="match status" value="1"/>
</dbReference>
<dbReference type="PROSITE" id="PS51273">
    <property type="entry name" value="GATASE_TYPE_1"/>
    <property type="match status" value="1"/>
</dbReference>
<dbReference type="PROSITE" id="PS51553">
    <property type="entry name" value="GMPS_ATP_PPASE"/>
    <property type="match status" value="1"/>
</dbReference>
<accession>Q92CU0</accession>
<evidence type="ECO:0000255" key="1">
    <source>
        <dbReference type="HAMAP-Rule" id="MF_00344"/>
    </source>
</evidence>
<proteinExistence type="inferred from homology"/>
<name>GUAA_LISIN</name>
<feature type="chain" id="PRO_0000140143" description="GMP synthase [glutamine-hydrolyzing]">
    <location>
        <begin position="1"/>
        <end position="518"/>
    </location>
</feature>
<feature type="domain" description="Glutamine amidotransferase type-1" evidence="1">
    <location>
        <begin position="13"/>
        <end position="203"/>
    </location>
</feature>
<feature type="domain" description="GMPS ATP-PPase" evidence="1">
    <location>
        <begin position="204"/>
        <end position="393"/>
    </location>
</feature>
<feature type="active site" description="Nucleophile" evidence="1">
    <location>
        <position position="90"/>
    </location>
</feature>
<feature type="active site" evidence="1">
    <location>
        <position position="177"/>
    </location>
</feature>
<feature type="active site" evidence="1">
    <location>
        <position position="179"/>
    </location>
</feature>
<feature type="binding site" evidence="1">
    <location>
        <begin position="231"/>
        <end position="237"/>
    </location>
    <ligand>
        <name>ATP</name>
        <dbReference type="ChEBI" id="CHEBI:30616"/>
    </ligand>
</feature>
<protein>
    <recommendedName>
        <fullName evidence="1">GMP synthase [glutamine-hydrolyzing]</fullName>
        <ecNumber evidence="1">6.3.5.2</ecNumber>
    </recommendedName>
    <alternativeName>
        <fullName evidence="1">GMP synthetase</fullName>
    </alternativeName>
    <alternativeName>
        <fullName evidence="1">Glutamine amidotransferase</fullName>
    </alternativeName>
</protein>
<keyword id="KW-0067">ATP-binding</keyword>
<keyword id="KW-0315">Glutamine amidotransferase</keyword>
<keyword id="KW-0332">GMP biosynthesis</keyword>
<keyword id="KW-0436">Ligase</keyword>
<keyword id="KW-0547">Nucleotide-binding</keyword>
<keyword id="KW-0658">Purine biosynthesis</keyword>
<sequence>MFKIMKDFTEQEKIIVLDFGSQYNQLITRRIREFGVYSELHPHTITVEEMKALNPTGIIFSGGPNSVYDEDAFRADERIFDMGIPILGICYGMQLMTTHFGGKVERAKDREYGKADIHVENPSRLFAGLPTDQVVWMSHGDLVVEEPAGFEVTATSKSCPIAGIADEDRLLYGVQFHPEVRHSAYGNELLKNFALNICGCKGDWTMENFSEVEIAKIQEIVGDKKVLLALSGGVDSSVVGVLIHKAIGDQLTCIFVDHGLLRKGEADQVMATLQGEFNMNIIKVDAKKRFMDKLAGVSDPEQKRKIIGNEFIYVFDDEANKLDGVEFLAQGTLYTDIIESGTATAQTIKSHHNVGGLPEDMQFKLIEPLNTLFKDEVRALGTELGMPDAIVWRQPFPGPGLGIRVLGEITEEKLEIVRDSDYILREEIKNAGLEREIWQYFTALPNIRSVGVMGDGRTYDHTVVVRAVTSIDGMTADWARIPWDVLEKISVRIVNEVDHVNRVVYDITSKPPATVEWE</sequence>
<gene>
    <name evidence="1" type="primary">guaA</name>
    <name type="ordered locus">lin1081</name>
</gene>
<organism>
    <name type="scientific">Listeria innocua serovar 6a (strain ATCC BAA-680 / CLIP 11262)</name>
    <dbReference type="NCBI Taxonomy" id="272626"/>
    <lineage>
        <taxon>Bacteria</taxon>
        <taxon>Bacillati</taxon>
        <taxon>Bacillota</taxon>
        <taxon>Bacilli</taxon>
        <taxon>Bacillales</taxon>
        <taxon>Listeriaceae</taxon>
        <taxon>Listeria</taxon>
    </lineage>
</organism>
<reference key="1">
    <citation type="journal article" date="2001" name="Science">
        <title>Comparative genomics of Listeria species.</title>
        <authorList>
            <person name="Glaser P."/>
            <person name="Frangeul L."/>
            <person name="Buchrieser C."/>
            <person name="Rusniok C."/>
            <person name="Amend A."/>
            <person name="Baquero F."/>
            <person name="Berche P."/>
            <person name="Bloecker H."/>
            <person name="Brandt P."/>
            <person name="Chakraborty T."/>
            <person name="Charbit A."/>
            <person name="Chetouani F."/>
            <person name="Couve E."/>
            <person name="de Daruvar A."/>
            <person name="Dehoux P."/>
            <person name="Domann E."/>
            <person name="Dominguez-Bernal G."/>
            <person name="Duchaud E."/>
            <person name="Durant L."/>
            <person name="Dussurget O."/>
            <person name="Entian K.-D."/>
            <person name="Fsihi H."/>
            <person name="Garcia-del Portillo F."/>
            <person name="Garrido P."/>
            <person name="Gautier L."/>
            <person name="Goebel W."/>
            <person name="Gomez-Lopez N."/>
            <person name="Hain T."/>
            <person name="Hauf J."/>
            <person name="Jackson D."/>
            <person name="Jones L.-M."/>
            <person name="Kaerst U."/>
            <person name="Kreft J."/>
            <person name="Kuhn M."/>
            <person name="Kunst F."/>
            <person name="Kurapkat G."/>
            <person name="Madueno E."/>
            <person name="Maitournam A."/>
            <person name="Mata Vicente J."/>
            <person name="Ng E."/>
            <person name="Nedjari H."/>
            <person name="Nordsiek G."/>
            <person name="Novella S."/>
            <person name="de Pablos B."/>
            <person name="Perez-Diaz J.-C."/>
            <person name="Purcell R."/>
            <person name="Remmel B."/>
            <person name="Rose M."/>
            <person name="Schlueter T."/>
            <person name="Simoes N."/>
            <person name="Tierrez A."/>
            <person name="Vazquez-Boland J.-A."/>
            <person name="Voss H."/>
            <person name="Wehland J."/>
            <person name="Cossart P."/>
        </authorList>
    </citation>
    <scope>NUCLEOTIDE SEQUENCE [LARGE SCALE GENOMIC DNA]</scope>
    <source>
        <strain>ATCC BAA-680 / CLIP 11262</strain>
    </source>
</reference>